<name>PAR1_CRILO</name>
<dbReference type="EMBL" id="X61958">
    <property type="protein sequence ID" value="CAA43957.1"/>
    <property type="molecule type" value="mRNA"/>
</dbReference>
<dbReference type="EMBL" id="U34047">
    <property type="protein sequence ID" value="AAA86747.1"/>
    <property type="molecule type" value="mRNA"/>
</dbReference>
<dbReference type="PIR" id="S17148">
    <property type="entry name" value="S17148"/>
</dbReference>
<dbReference type="SMR" id="Q00991"/>
<dbReference type="GlyCosmos" id="Q00991">
    <property type="glycosylation" value="4 sites, No reported glycans"/>
</dbReference>
<dbReference type="GO" id="GO:0005901">
    <property type="term" value="C:caveola"/>
    <property type="evidence" value="ECO:0000250"/>
    <property type="project" value="UniProtKB"/>
</dbReference>
<dbReference type="GO" id="GO:0031594">
    <property type="term" value="C:neuromuscular junction"/>
    <property type="evidence" value="ECO:0000250"/>
    <property type="project" value="UniProtKB"/>
</dbReference>
<dbReference type="GO" id="GO:0005886">
    <property type="term" value="C:plasma membrane"/>
    <property type="evidence" value="ECO:0000250"/>
    <property type="project" value="UniProtKB"/>
</dbReference>
<dbReference type="GO" id="GO:0031094">
    <property type="term" value="C:platelet dense tubular network"/>
    <property type="evidence" value="ECO:0000250"/>
    <property type="project" value="UniProtKB"/>
</dbReference>
<dbReference type="GO" id="GO:0045211">
    <property type="term" value="C:postsynaptic membrane"/>
    <property type="evidence" value="ECO:0000250"/>
    <property type="project" value="UniProtKB"/>
</dbReference>
<dbReference type="GO" id="GO:0004930">
    <property type="term" value="F:G protein-coupled receptor activity"/>
    <property type="evidence" value="ECO:0000250"/>
    <property type="project" value="UniProtKB"/>
</dbReference>
<dbReference type="GO" id="GO:0001965">
    <property type="term" value="F:G-protein alpha-subunit binding"/>
    <property type="evidence" value="ECO:0000250"/>
    <property type="project" value="UniProtKB"/>
</dbReference>
<dbReference type="GO" id="GO:0031681">
    <property type="term" value="F:G-protein beta-subunit binding"/>
    <property type="evidence" value="ECO:0000250"/>
    <property type="project" value="UniProtKB"/>
</dbReference>
<dbReference type="GO" id="GO:0015057">
    <property type="term" value="F:thrombin-activated receptor activity"/>
    <property type="evidence" value="ECO:0000250"/>
    <property type="project" value="UniProtKB"/>
</dbReference>
<dbReference type="GO" id="GO:0002248">
    <property type="term" value="P:connective tissue replacement involved in inflammatory response wound healing"/>
    <property type="evidence" value="ECO:0000250"/>
    <property type="project" value="UniProtKB"/>
</dbReference>
<dbReference type="GO" id="GO:0007529">
    <property type="term" value="P:establishment of synaptic specificity at neuromuscular junction"/>
    <property type="evidence" value="ECO:0000250"/>
    <property type="project" value="UniProtKB"/>
</dbReference>
<dbReference type="GO" id="GO:0007186">
    <property type="term" value="P:G protein-coupled receptor signaling pathway"/>
    <property type="evidence" value="ECO:0000250"/>
    <property type="project" value="UniProtKB"/>
</dbReference>
<dbReference type="GO" id="GO:0048873">
    <property type="term" value="P:homeostasis of number of cells within a tissue"/>
    <property type="evidence" value="ECO:0000250"/>
    <property type="project" value="UniProtKB"/>
</dbReference>
<dbReference type="GO" id="GO:0006954">
    <property type="term" value="P:inflammatory response"/>
    <property type="evidence" value="ECO:0000250"/>
    <property type="project" value="UniProtKB"/>
</dbReference>
<dbReference type="GO" id="GO:0008285">
    <property type="term" value="P:negative regulation of cell population proliferation"/>
    <property type="evidence" value="ECO:0000250"/>
    <property type="project" value="UniProtKB"/>
</dbReference>
<dbReference type="GO" id="GO:0003105">
    <property type="term" value="P:negative regulation of glomerular filtration"/>
    <property type="evidence" value="ECO:0000250"/>
    <property type="project" value="UniProtKB"/>
</dbReference>
<dbReference type="GO" id="GO:0043524">
    <property type="term" value="P:negative regulation of neuron apoptotic process"/>
    <property type="evidence" value="ECO:0000250"/>
    <property type="project" value="UniProtKB"/>
</dbReference>
<dbReference type="GO" id="GO:1900134">
    <property type="term" value="P:negative regulation of renin secretion into blood stream"/>
    <property type="evidence" value="ECO:0000250"/>
    <property type="project" value="UniProtKB"/>
</dbReference>
<dbReference type="GO" id="GO:0007200">
    <property type="term" value="P:phospholipase C-activating G protein-coupled receptor signaling pathway"/>
    <property type="evidence" value="ECO:0000250"/>
    <property type="project" value="UniProtKB"/>
</dbReference>
<dbReference type="GO" id="GO:0030168">
    <property type="term" value="P:platelet activation"/>
    <property type="evidence" value="ECO:0000250"/>
    <property type="project" value="UniProtKB"/>
</dbReference>
<dbReference type="GO" id="GO:0043065">
    <property type="term" value="P:positive regulation of apoptotic process"/>
    <property type="evidence" value="ECO:0000250"/>
    <property type="project" value="UniProtKB"/>
</dbReference>
<dbReference type="GO" id="GO:0030194">
    <property type="term" value="P:positive regulation of blood coagulation"/>
    <property type="evidence" value="ECO:0000250"/>
    <property type="project" value="UniProtKB"/>
</dbReference>
<dbReference type="GO" id="GO:0051928">
    <property type="term" value="P:positive regulation of calcium ion transport"/>
    <property type="evidence" value="ECO:0000250"/>
    <property type="project" value="UniProtKB"/>
</dbReference>
<dbReference type="GO" id="GO:0043123">
    <property type="term" value="P:positive regulation of canonical NF-kappaB signal transduction"/>
    <property type="evidence" value="ECO:0000250"/>
    <property type="project" value="UniProtKB"/>
</dbReference>
<dbReference type="GO" id="GO:0030335">
    <property type="term" value="P:positive regulation of cell migration"/>
    <property type="evidence" value="ECO:0000250"/>
    <property type="project" value="UniProtKB"/>
</dbReference>
<dbReference type="GO" id="GO:0008284">
    <property type="term" value="P:positive regulation of cell population proliferation"/>
    <property type="evidence" value="ECO:0000250"/>
    <property type="project" value="UniProtKB"/>
</dbReference>
<dbReference type="GO" id="GO:0032967">
    <property type="term" value="P:positive regulation of collagen biosynthetic process"/>
    <property type="evidence" value="ECO:0000250"/>
    <property type="project" value="UniProtKB"/>
</dbReference>
<dbReference type="GO" id="GO:0007204">
    <property type="term" value="P:positive regulation of cytosolic calcium ion concentration"/>
    <property type="evidence" value="ECO:0000250"/>
    <property type="project" value="UniProtKB"/>
</dbReference>
<dbReference type="GO" id="GO:0045893">
    <property type="term" value="P:positive regulation of DNA-templated transcription"/>
    <property type="evidence" value="ECO:0000250"/>
    <property type="project" value="UniProtKB"/>
</dbReference>
<dbReference type="GO" id="GO:0070374">
    <property type="term" value="P:positive regulation of ERK1 and ERK2 cascade"/>
    <property type="evidence" value="ECO:0000250"/>
    <property type="project" value="UniProtKB"/>
</dbReference>
<dbReference type="GO" id="GO:0032755">
    <property type="term" value="P:positive regulation of interleukin-6 production"/>
    <property type="evidence" value="ECO:0000250"/>
    <property type="project" value="UniProtKB"/>
</dbReference>
<dbReference type="GO" id="GO:0032757">
    <property type="term" value="P:positive regulation of interleukin-8 production"/>
    <property type="evidence" value="ECO:0000250"/>
    <property type="project" value="UniProtKB"/>
</dbReference>
<dbReference type="GO" id="GO:0043410">
    <property type="term" value="P:positive regulation of MAPK cascade"/>
    <property type="evidence" value="ECO:0000250"/>
    <property type="project" value="UniProtKB"/>
</dbReference>
<dbReference type="GO" id="GO:0051897">
    <property type="term" value="P:positive regulation of phosphatidylinositol 3-kinase/protein kinase B signal transduction"/>
    <property type="evidence" value="ECO:0000250"/>
    <property type="project" value="UniProtKB"/>
</dbReference>
<dbReference type="GO" id="GO:0046427">
    <property type="term" value="P:positive regulation of receptor signaling pathway via JAK-STAT"/>
    <property type="evidence" value="ECO:0000250"/>
    <property type="project" value="UniProtKB"/>
</dbReference>
<dbReference type="GO" id="GO:0051281">
    <property type="term" value="P:positive regulation of release of sequestered calcium ion into cytosol"/>
    <property type="evidence" value="ECO:0000250"/>
    <property type="project" value="UniProtKB"/>
</dbReference>
<dbReference type="GO" id="GO:0035025">
    <property type="term" value="P:positive regulation of Rho protein signal transduction"/>
    <property type="evidence" value="ECO:0000250"/>
    <property type="project" value="UniProtKB"/>
</dbReference>
<dbReference type="GO" id="GO:0045987">
    <property type="term" value="P:positive regulation of smooth muscle contraction"/>
    <property type="evidence" value="ECO:0000250"/>
    <property type="project" value="UniProtKB"/>
</dbReference>
<dbReference type="GO" id="GO:0045907">
    <property type="term" value="P:positive regulation of vasoconstriction"/>
    <property type="evidence" value="ECO:0000250"/>
    <property type="project" value="UniProtKB"/>
</dbReference>
<dbReference type="GO" id="GO:0032651">
    <property type="term" value="P:regulation of interleukin-1 beta production"/>
    <property type="evidence" value="ECO:0000250"/>
    <property type="project" value="UniProtKB"/>
</dbReference>
<dbReference type="GO" id="GO:0048167">
    <property type="term" value="P:regulation of synaptic plasticity"/>
    <property type="evidence" value="ECO:0000250"/>
    <property type="project" value="UniProtKB"/>
</dbReference>
<dbReference type="GO" id="GO:0051209">
    <property type="term" value="P:release of sequestered calcium ion into cytosol"/>
    <property type="evidence" value="ECO:0000250"/>
    <property type="project" value="UniProtKB"/>
</dbReference>
<dbReference type="GO" id="GO:0032496">
    <property type="term" value="P:response to lipopolysaccharide"/>
    <property type="evidence" value="ECO:0000250"/>
    <property type="project" value="UniProtKB"/>
</dbReference>
<dbReference type="GO" id="GO:0009611">
    <property type="term" value="P:response to wounding"/>
    <property type="evidence" value="ECO:0000250"/>
    <property type="project" value="UniProtKB"/>
</dbReference>
<dbReference type="GO" id="GO:0070493">
    <property type="term" value="P:thrombin-activated receptor signaling pathway"/>
    <property type="evidence" value="ECO:0000250"/>
    <property type="project" value="UniProtKB"/>
</dbReference>
<dbReference type="CDD" id="cd15369">
    <property type="entry name" value="7tmA_PAR1"/>
    <property type="match status" value="1"/>
</dbReference>
<dbReference type="FunFam" id="1.20.1070.10:FF:000040">
    <property type="entry name" value="Coagulation factor 2 (thrombin) receptor"/>
    <property type="match status" value="1"/>
</dbReference>
<dbReference type="Gene3D" id="1.20.1070.10">
    <property type="entry name" value="Rhodopsin 7-helix transmembrane proteins"/>
    <property type="match status" value="1"/>
</dbReference>
<dbReference type="InterPro" id="IPR000276">
    <property type="entry name" value="GPCR_Rhodpsn"/>
</dbReference>
<dbReference type="InterPro" id="IPR017452">
    <property type="entry name" value="GPCR_Rhodpsn_7TM"/>
</dbReference>
<dbReference type="InterPro" id="IPR003912">
    <property type="entry name" value="Protea_act_rcpt"/>
</dbReference>
<dbReference type="InterPro" id="IPR000935">
    <property type="entry name" value="Thrmbn_rcpt"/>
</dbReference>
<dbReference type="PANTHER" id="PTHR24232">
    <property type="entry name" value="G-PROTEIN COUPLED RECEPTOR"/>
    <property type="match status" value="1"/>
</dbReference>
<dbReference type="PANTHER" id="PTHR24232:SF20">
    <property type="entry name" value="PROTEINASE-ACTIVATED RECEPTOR 1"/>
    <property type="match status" value="1"/>
</dbReference>
<dbReference type="Pfam" id="PF00001">
    <property type="entry name" value="7tm_1"/>
    <property type="match status" value="1"/>
</dbReference>
<dbReference type="PRINTS" id="PR00237">
    <property type="entry name" value="GPCRRHODOPSN"/>
</dbReference>
<dbReference type="PRINTS" id="PR01428">
    <property type="entry name" value="PROTEASEAR"/>
</dbReference>
<dbReference type="PRINTS" id="PR00908">
    <property type="entry name" value="THROMBINR"/>
</dbReference>
<dbReference type="SUPFAM" id="SSF81321">
    <property type="entry name" value="Family A G protein-coupled receptor-like"/>
    <property type="match status" value="1"/>
</dbReference>
<dbReference type="PROSITE" id="PS00237">
    <property type="entry name" value="G_PROTEIN_RECEP_F1_1"/>
    <property type="match status" value="1"/>
</dbReference>
<dbReference type="PROSITE" id="PS50262">
    <property type="entry name" value="G_PROTEIN_RECEP_F1_2"/>
    <property type="match status" value="1"/>
</dbReference>
<accession>Q00991</accession>
<accession>Q60461</accession>
<comment type="function">
    <text evidence="2 3 4">High affinity receptor that binds the activated thrombin, leading to calcium release from intracellular stores. The thrombin-activated receptor signaling pathway is mediated through PTX-insensitive G proteins, activation of phospholipase C resulting in the production of 1D-myo-inositol 1,4,5-trisphosphate (InsP3) which binds to InsP3 receptors causing calcium release from the stores (By similarity). In astrocytes, the calcium released into the cytosol allows the Ca(2+)-dependent release of L-glutamate into the synaptic cleft through BEST1, that targets the neuronal postsynaptic GRIN2A/NMDAR receptor resulting in the synaptic plasticity regulation (By similarity). May play a role in platelets activation and in vascular development (By similarity). Mediates up-regulation of pro-inflammatory cytokines, such as MCP-1/CCL2 and IL6, triggered by coagulation factor Xa (F10) in cardiac fibroblasts and umbilical vein endothelial cells (By similarity).</text>
</comment>
<comment type="subcellular location">
    <subcellularLocation>
        <location evidence="3">Cell membrane</location>
        <topology evidence="3">Multi-pass membrane protein</topology>
    </subcellularLocation>
</comment>
<comment type="domain">
    <text evidence="1">The cleaved signal peptide may not be degraded and may function as an intracellular angiogenesis inhibitor peptide known as parstatin.</text>
</comment>
<comment type="PTM">
    <text evidence="2">Proteolytic cleavage by thrombin generates a new N-terminus that functions as a tethered ligand. Also proteolytically cleaved by cathepsin CTSG.</text>
</comment>
<comment type="PTM">
    <text evidence="1">Phosphorylated in the C-terminal tail; probably mediating desensitization prior to the uncoupling and internalization of the receptor.</text>
</comment>
<comment type="similarity">
    <text evidence="6">Belongs to the G-protein coupled receptor 1 family.</text>
</comment>
<protein>
    <recommendedName>
        <fullName evidence="2">Proteinase-activated receptor 1</fullName>
        <shortName>PAR-1</shortName>
    </recommendedName>
    <alternativeName>
        <fullName>Thrombin receptor</fullName>
    </alternativeName>
</protein>
<organism>
    <name type="scientific">Cricetulus longicaudatus</name>
    <name type="common">Long-tailed dwarf hamster</name>
    <dbReference type="NCBI Taxonomy" id="10030"/>
    <lineage>
        <taxon>Eukaryota</taxon>
        <taxon>Metazoa</taxon>
        <taxon>Chordata</taxon>
        <taxon>Craniata</taxon>
        <taxon>Vertebrata</taxon>
        <taxon>Euteleostomi</taxon>
        <taxon>Mammalia</taxon>
        <taxon>Eutheria</taxon>
        <taxon>Euarchontoglires</taxon>
        <taxon>Glires</taxon>
        <taxon>Rodentia</taxon>
        <taxon>Myomorpha</taxon>
        <taxon>Muroidea</taxon>
        <taxon>Cricetidae</taxon>
        <taxon>Cricetinae</taxon>
        <taxon>Cricetulus</taxon>
    </lineage>
</organism>
<reference key="1">
    <citation type="journal article" date="1991" name="FEBS Lett.">
        <title>cDNA cloning and expression of a hamster alpha-thrombin receptor coupled to Ca2+ mobilization.</title>
        <authorList>
            <person name="Rasmussen U.B."/>
            <person name="Vouret-Craviari V."/>
            <person name="Jallat S."/>
            <person name="Schlesinger Y."/>
            <person name="Pages G."/>
            <person name="Pavirani A."/>
            <person name="Lecocq J.-P."/>
            <person name="Pouyssegur J."/>
            <person name="Obberghen-Schilling E."/>
        </authorList>
    </citation>
    <scope>NUCLEOTIDE SEQUENCE [MRNA]</scope>
    <source>
        <tissue>Lung</tissue>
    </source>
</reference>
<reference key="2">
    <citation type="journal article" date="1995" name="Biochem. Biophys. Res. Commun.">
        <title>Thrombin receptor polymorphism in Chinese hamster.</title>
        <authorList>
            <person name="Hartmann T."/>
            <person name="Grace M.B."/>
            <person name="Buzard G.S."/>
            <person name="Ruoss S.J."/>
        </authorList>
    </citation>
    <scope>NUCLEOTIDE SEQUENCE [MRNA] OF 42-428</scope>
</reference>
<sequence>MGPQRLLLVAAGLSLCGPLLSSRVPVRQPESEMTDATVNPRSFFLRNPGENTFELIPLGDEEEKNESTLPEGRAIYLNKSHSPPAPLAPFISEDASGYLTSPWLRLFIPSVYTFVFVVSLPLNILAIAVFVLKMKVKKPAVVYMLHLAMADVLFVSVLPLKISYYFSGSDWQFGSGMCRFATAAFYCNMYASIMLMTVISIDRFLAVVYPIQSLSWRTLGRANFTCLVIWVMAIMGVVPLLLKEQTTRVPGLNITTCHDVLNETLLQGFYSYYFSAFSAVFFLVPLIISTICYMSIIRCLSSSSVANRSKKSRALFLSAAVFCVFIVCFGPTNVLLIMHYLLLSDSPATEKAYFAYLLCVCVSSVSCCIDPLIYYYASSECQRHLYGILCCKESSDPNSYNSTGQLMPSKMDTCSSHLNNSIYKKLLA</sequence>
<gene>
    <name evidence="2" type="primary">F2R</name>
    <name type="synonym">PAR1</name>
</gene>
<evidence type="ECO:0000250" key="1"/>
<evidence type="ECO:0000250" key="2">
    <source>
        <dbReference type="UniProtKB" id="P25116"/>
    </source>
</evidence>
<evidence type="ECO:0000250" key="3">
    <source>
        <dbReference type="UniProtKB" id="P26824"/>
    </source>
</evidence>
<evidence type="ECO:0000250" key="4">
    <source>
        <dbReference type="UniProtKB" id="P30558"/>
    </source>
</evidence>
<evidence type="ECO:0000255" key="5"/>
<evidence type="ECO:0000255" key="6">
    <source>
        <dbReference type="PROSITE-ProRule" id="PRU00521"/>
    </source>
</evidence>
<evidence type="ECO:0000305" key="7"/>
<proteinExistence type="evidence at transcript level"/>
<keyword id="KW-0094">Blood coagulation</keyword>
<keyword id="KW-1003">Cell membrane</keyword>
<keyword id="KW-1015">Disulfide bond</keyword>
<keyword id="KW-0297">G-protein coupled receptor</keyword>
<keyword id="KW-0325">Glycoprotein</keyword>
<keyword id="KW-0356">Hemostasis</keyword>
<keyword id="KW-0472">Membrane</keyword>
<keyword id="KW-0597">Phosphoprotein</keyword>
<keyword id="KW-0675">Receptor</keyword>
<keyword id="KW-0732">Signal</keyword>
<keyword id="KW-0807">Transducer</keyword>
<keyword id="KW-0812">Transmembrane</keyword>
<keyword id="KW-1133">Transmembrane helix</keyword>
<feature type="signal peptide" evidence="1">
    <location>
        <begin position="1"/>
        <end position="21"/>
    </location>
</feature>
<feature type="propeptide" id="PRO_0000012738" description="Removed for receptor activation" evidence="1">
    <location>
        <begin position="22"/>
        <end position="41"/>
    </location>
</feature>
<feature type="chain" id="PRO_0000012739" description="Proteinase-activated receptor 1">
    <location>
        <begin position="42"/>
        <end position="428"/>
    </location>
</feature>
<feature type="topological domain" description="Extracellular" evidence="5">
    <location>
        <begin position="42"/>
        <end position="105"/>
    </location>
</feature>
<feature type="transmembrane region" description="Helical; Name=1" evidence="5">
    <location>
        <begin position="106"/>
        <end position="131"/>
    </location>
</feature>
<feature type="topological domain" description="Cytoplasmic" evidence="5">
    <location>
        <begin position="132"/>
        <end position="140"/>
    </location>
</feature>
<feature type="transmembrane region" description="Helical; Name=2" evidence="5">
    <location>
        <begin position="141"/>
        <end position="160"/>
    </location>
</feature>
<feature type="topological domain" description="Extracellular" evidence="5">
    <location>
        <begin position="161"/>
        <end position="179"/>
    </location>
</feature>
<feature type="transmembrane region" description="Helical; Name=3" evidence="5">
    <location>
        <begin position="180"/>
        <end position="201"/>
    </location>
</feature>
<feature type="topological domain" description="Cytoplasmic" evidence="5">
    <location>
        <begin position="202"/>
        <end position="221"/>
    </location>
</feature>
<feature type="transmembrane region" description="Helical; Name=4" evidence="5">
    <location>
        <begin position="222"/>
        <end position="242"/>
    </location>
</feature>
<feature type="topological domain" description="Extracellular" evidence="5">
    <location>
        <begin position="243"/>
        <end position="271"/>
    </location>
</feature>
<feature type="transmembrane region" description="Helical; Name=5" evidence="5">
    <location>
        <begin position="272"/>
        <end position="291"/>
    </location>
</feature>
<feature type="topological domain" description="Cytoplasmic" evidence="5">
    <location>
        <begin position="292"/>
        <end position="314"/>
    </location>
</feature>
<feature type="transmembrane region" description="Helical; Name=6" evidence="5">
    <location>
        <begin position="315"/>
        <end position="337"/>
    </location>
</feature>
<feature type="topological domain" description="Extracellular" evidence="5">
    <location>
        <begin position="338"/>
        <end position="352"/>
    </location>
</feature>
<feature type="transmembrane region" description="Helical; Name=7" evidence="5">
    <location>
        <begin position="353"/>
        <end position="377"/>
    </location>
</feature>
<feature type="topological domain" description="Cytoplasmic" evidence="5">
    <location>
        <begin position="378"/>
        <end position="428"/>
    </location>
</feature>
<feature type="site" description="Cleavage; by thrombin and CTSG" evidence="2">
    <location>
        <begin position="41"/>
        <end position="42"/>
    </location>
</feature>
<feature type="modified residue" description="Phosphoserine" evidence="2">
    <location>
        <position position="421"/>
    </location>
</feature>
<feature type="glycosylation site" description="N-linked (GlcNAc...) asparagine" evidence="5">
    <location>
        <position position="65"/>
    </location>
</feature>
<feature type="glycosylation site" description="N-linked (GlcNAc...) asparagine" evidence="5">
    <location>
        <position position="78"/>
    </location>
</feature>
<feature type="glycosylation site" description="N-linked (GlcNAc...) asparagine" evidence="5">
    <location>
        <position position="253"/>
    </location>
</feature>
<feature type="glycosylation site" description="N-linked (GlcNAc...) asparagine" evidence="5">
    <location>
        <position position="262"/>
    </location>
</feature>
<feature type="disulfide bond" evidence="6">
    <location>
        <begin position="178"/>
        <end position="257"/>
    </location>
</feature>
<feature type="sequence variant" description="In an allele.">
    <location>
        <position position="84"/>
    </location>
</feature>
<feature type="sequence conflict" description="In Ref. 1; CAA43957." evidence="7" ref="1">
    <original>H</original>
    <variation>T</variation>
    <location>
        <position position="384"/>
    </location>
</feature>